<name>ARGB_LEPBJ</name>
<gene>
    <name evidence="1" type="primary">argB</name>
    <name type="ordered locus">LBJ_4096</name>
</gene>
<comment type="function">
    <text evidence="1">Catalyzes the ATP-dependent phosphorylation of N-acetyl-L-glutamate.</text>
</comment>
<comment type="catalytic activity">
    <reaction evidence="1">
        <text>N-acetyl-L-glutamate + ATP = N-acetyl-L-glutamyl 5-phosphate + ADP</text>
        <dbReference type="Rhea" id="RHEA:14629"/>
        <dbReference type="ChEBI" id="CHEBI:30616"/>
        <dbReference type="ChEBI" id="CHEBI:44337"/>
        <dbReference type="ChEBI" id="CHEBI:57936"/>
        <dbReference type="ChEBI" id="CHEBI:456216"/>
        <dbReference type="EC" id="2.7.2.8"/>
    </reaction>
</comment>
<comment type="pathway">
    <text evidence="1">Amino-acid biosynthesis; L-arginine biosynthesis; N(2)-acetyl-L-ornithine from L-glutamate: step 2/4.</text>
</comment>
<comment type="subcellular location">
    <subcellularLocation>
        <location evidence="1">Cytoplasm</location>
    </subcellularLocation>
</comment>
<comment type="similarity">
    <text evidence="1">Belongs to the acetylglutamate kinase family. ArgB subfamily.</text>
</comment>
<dbReference type="EC" id="2.7.2.8" evidence="1"/>
<dbReference type="EMBL" id="CP000351">
    <property type="protein sequence ID" value="ABJ77491.1"/>
    <property type="molecule type" value="Genomic_DNA"/>
</dbReference>
<dbReference type="RefSeq" id="WP_011672175.1">
    <property type="nucleotide sequence ID" value="NC_008511.1"/>
</dbReference>
<dbReference type="SMR" id="Q04NM9"/>
<dbReference type="KEGG" id="lbj:LBJ_4096"/>
<dbReference type="HOGENOM" id="CLU_053680_0_0_12"/>
<dbReference type="UniPathway" id="UPA00068">
    <property type="reaction ID" value="UER00107"/>
</dbReference>
<dbReference type="Proteomes" id="UP000000656">
    <property type="component" value="Chromosome 2"/>
</dbReference>
<dbReference type="GO" id="GO:0005737">
    <property type="term" value="C:cytoplasm"/>
    <property type="evidence" value="ECO:0007669"/>
    <property type="project" value="UniProtKB-SubCell"/>
</dbReference>
<dbReference type="GO" id="GO:0003991">
    <property type="term" value="F:acetylglutamate kinase activity"/>
    <property type="evidence" value="ECO:0007669"/>
    <property type="project" value="UniProtKB-UniRule"/>
</dbReference>
<dbReference type="GO" id="GO:0005524">
    <property type="term" value="F:ATP binding"/>
    <property type="evidence" value="ECO:0007669"/>
    <property type="project" value="UniProtKB-UniRule"/>
</dbReference>
<dbReference type="GO" id="GO:0042450">
    <property type="term" value="P:arginine biosynthetic process via ornithine"/>
    <property type="evidence" value="ECO:0007669"/>
    <property type="project" value="UniProtKB-UniRule"/>
</dbReference>
<dbReference type="GO" id="GO:0006526">
    <property type="term" value="P:L-arginine biosynthetic process"/>
    <property type="evidence" value="ECO:0007669"/>
    <property type="project" value="UniProtKB-UniPathway"/>
</dbReference>
<dbReference type="CDD" id="cd04250">
    <property type="entry name" value="AAK_NAGK-C"/>
    <property type="match status" value="1"/>
</dbReference>
<dbReference type="FunFam" id="3.40.1160.10:FF:000004">
    <property type="entry name" value="Acetylglutamate kinase"/>
    <property type="match status" value="1"/>
</dbReference>
<dbReference type="Gene3D" id="3.40.1160.10">
    <property type="entry name" value="Acetylglutamate kinase-like"/>
    <property type="match status" value="1"/>
</dbReference>
<dbReference type="HAMAP" id="MF_00082">
    <property type="entry name" value="ArgB"/>
    <property type="match status" value="1"/>
</dbReference>
<dbReference type="InterPro" id="IPR036393">
    <property type="entry name" value="AceGlu_kinase-like_sf"/>
</dbReference>
<dbReference type="InterPro" id="IPR004662">
    <property type="entry name" value="AcgluKinase_fam"/>
</dbReference>
<dbReference type="InterPro" id="IPR037528">
    <property type="entry name" value="ArgB"/>
</dbReference>
<dbReference type="InterPro" id="IPR001048">
    <property type="entry name" value="Asp/Glu/Uridylate_kinase"/>
</dbReference>
<dbReference type="InterPro" id="IPR041727">
    <property type="entry name" value="NAGK-C"/>
</dbReference>
<dbReference type="NCBIfam" id="TIGR00761">
    <property type="entry name" value="argB"/>
    <property type="match status" value="1"/>
</dbReference>
<dbReference type="PANTHER" id="PTHR23342">
    <property type="entry name" value="N-ACETYLGLUTAMATE SYNTHASE"/>
    <property type="match status" value="1"/>
</dbReference>
<dbReference type="PANTHER" id="PTHR23342:SF0">
    <property type="entry name" value="N-ACETYLGLUTAMATE SYNTHASE, MITOCHONDRIAL"/>
    <property type="match status" value="1"/>
</dbReference>
<dbReference type="Pfam" id="PF00696">
    <property type="entry name" value="AA_kinase"/>
    <property type="match status" value="1"/>
</dbReference>
<dbReference type="PIRSF" id="PIRSF000728">
    <property type="entry name" value="NAGK"/>
    <property type="match status" value="1"/>
</dbReference>
<dbReference type="SUPFAM" id="SSF53633">
    <property type="entry name" value="Carbamate kinase-like"/>
    <property type="match status" value="1"/>
</dbReference>
<protein>
    <recommendedName>
        <fullName evidence="1">Acetylglutamate kinase</fullName>
        <ecNumber evidence="1">2.7.2.8</ecNumber>
    </recommendedName>
    <alternativeName>
        <fullName evidence="1">N-acetyl-L-glutamate 5-phosphotransferase</fullName>
    </alternativeName>
    <alternativeName>
        <fullName evidence="1">NAG kinase</fullName>
        <shortName evidence="1">NAGK</shortName>
    </alternativeName>
</protein>
<accession>Q04NM9</accession>
<evidence type="ECO:0000255" key="1">
    <source>
        <dbReference type="HAMAP-Rule" id="MF_00082"/>
    </source>
</evidence>
<feature type="chain" id="PRO_0000335640" description="Acetylglutamate kinase">
    <location>
        <begin position="1"/>
        <end position="291"/>
    </location>
</feature>
<feature type="binding site" evidence="1">
    <location>
        <begin position="64"/>
        <end position="65"/>
    </location>
    <ligand>
        <name>substrate</name>
    </ligand>
</feature>
<feature type="binding site" evidence="1">
    <location>
        <position position="86"/>
    </location>
    <ligand>
        <name>substrate</name>
    </ligand>
</feature>
<feature type="binding site" evidence="1">
    <location>
        <position position="190"/>
    </location>
    <ligand>
        <name>substrate</name>
    </ligand>
</feature>
<feature type="site" description="Transition state stabilizer" evidence="1">
    <location>
        <position position="29"/>
    </location>
</feature>
<feature type="site" description="Transition state stabilizer" evidence="1">
    <location>
        <position position="249"/>
    </location>
</feature>
<proteinExistence type="inferred from homology"/>
<organism>
    <name type="scientific">Leptospira borgpetersenii serovar Hardjo-bovis (strain JB197)</name>
    <dbReference type="NCBI Taxonomy" id="355277"/>
    <lineage>
        <taxon>Bacteria</taxon>
        <taxon>Pseudomonadati</taxon>
        <taxon>Spirochaetota</taxon>
        <taxon>Spirochaetia</taxon>
        <taxon>Leptospirales</taxon>
        <taxon>Leptospiraceae</taxon>
        <taxon>Leptospira</taxon>
    </lineage>
</organism>
<sequence>MEKLLERVNHILEALPYITKYSGKTVVIKYGGAAMAKADLKESFAKDIVLLKYVGIHPVIVHGGGPEINRLLDSLKIPTEFIHGHRVTDTQTMEVVEMVLTGKVNKQIVSMINSQGGKAVGISGKDGNLAKAVKAPIEIELEGKAKQLFDVGLVGRIESINPEILHNLQKEGFIPVISPVAESVEGDSLNINADTFAGEIAGALKAEKLILLTDTEGILIDGKLATGLSRGKMKEYIRKGEISGGMIPKVECCLAAIDQGVNRTHIIDGRVSHSILIEIFTNQGIGSLIES</sequence>
<reference key="1">
    <citation type="journal article" date="2006" name="Proc. Natl. Acad. Sci. U.S.A.">
        <title>Genome reduction in Leptospira borgpetersenii reflects limited transmission potential.</title>
        <authorList>
            <person name="Bulach D.M."/>
            <person name="Zuerner R.L."/>
            <person name="Wilson P."/>
            <person name="Seemann T."/>
            <person name="McGrath A."/>
            <person name="Cullen P.A."/>
            <person name="Davis J."/>
            <person name="Johnson M."/>
            <person name="Kuczek E."/>
            <person name="Alt D.P."/>
            <person name="Peterson-Burch B."/>
            <person name="Coppel R.L."/>
            <person name="Rood J.I."/>
            <person name="Davies J.K."/>
            <person name="Adler B."/>
        </authorList>
    </citation>
    <scope>NUCLEOTIDE SEQUENCE [LARGE SCALE GENOMIC DNA]</scope>
    <source>
        <strain>JB197</strain>
    </source>
</reference>
<keyword id="KW-0028">Amino-acid biosynthesis</keyword>
<keyword id="KW-0055">Arginine biosynthesis</keyword>
<keyword id="KW-0067">ATP-binding</keyword>
<keyword id="KW-0963">Cytoplasm</keyword>
<keyword id="KW-0418">Kinase</keyword>
<keyword id="KW-0547">Nucleotide-binding</keyword>
<keyword id="KW-0808">Transferase</keyword>